<keyword id="KW-0008">Acetylcholine receptor inhibiting toxin</keyword>
<keyword id="KW-0903">Direct protein sequencing</keyword>
<keyword id="KW-1015">Disulfide bond</keyword>
<keyword id="KW-0872">Ion channel impairing toxin</keyword>
<keyword id="KW-0528">Neurotoxin</keyword>
<keyword id="KW-0629">Postsynaptic neurotoxin</keyword>
<keyword id="KW-0964">Secreted</keyword>
<keyword id="KW-0732">Signal</keyword>
<keyword id="KW-0800">Toxin</keyword>
<evidence type="ECO:0000250" key="1"/>
<evidence type="ECO:0000250" key="2">
    <source>
        <dbReference type="UniProtKB" id="P0C1Z0"/>
    </source>
</evidence>
<evidence type="ECO:0000250" key="3">
    <source>
        <dbReference type="UniProtKB" id="P60775"/>
    </source>
</evidence>
<evidence type="ECO:0000269" key="4">
    <source>
    </source>
</evidence>
<evidence type="ECO:0000305" key="5"/>
<evidence type="ECO:0000305" key="6">
    <source>
    </source>
</evidence>
<accession>F5CPD8</accession>
<organism>
    <name type="scientific">Micrurus altirostris</name>
    <name type="common">Uruguayan coral snake</name>
    <name type="synonym">Elaps altirostris</name>
    <dbReference type="NCBI Taxonomy" id="129457"/>
    <lineage>
        <taxon>Eukaryota</taxon>
        <taxon>Metazoa</taxon>
        <taxon>Chordata</taxon>
        <taxon>Craniata</taxon>
        <taxon>Vertebrata</taxon>
        <taxon>Euteleostomi</taxon>
        <taxon>Lepidosauria</taxon>
        <taxon>Squamata</taxon>
        <taxon>Bifurcata</taxon>
        <taxon>Unidentata</taxon>
        <taxon>Episquamata</taxon>
        <taxon>Toxicofera</taxon>
        <taxon>Serpentes</taxon>
        <taxon>Colubroidea</taxon>
        <taxon>Elapidae</taxon>
        <taxon>Elapinae</taxon>
        <taxon>Micrurus</taxon>
    </lineage>
</organism>
<name>3S157_MICAT</name>
<feature type="signal peptide" evidence="4">
    <location>
        <begin position="1"/>
        <end position="21"/>
    </location>
</feature>
<feature type="chain" id="PRO_0000422899" description="Three-finger toxin MALT0057C" evidence="6">
    <location>
        <begin position="22"/>
        <end position="81"/>
    </location>
</feature>
<feature type="site" description="May be critical for toxicity" evidence="1">
    <location>
        <position position="52"/>
    </location>
</feature>
<feature type="site" description="May be critical for toxicity" evidence="1">
    <location>
        <position position="55"/>
    </location>
</feature>
<feature type="disulfide bond" evidence="2">
    <location>
        <begin position="24"/>
        <end position="43"/>
    </location>
</feature>
<feature type="disulfide bond" evidence="2">
    <location>
        <begin position="38"/>
        <end position="60"/>
    </location>
</feature>
<feature type="disulfide bond" evidence="2">
    <location>
        <begin position="62"/>
        <end position="73"/>
    </location>
</feature>
<feature type="disulfide bond" evidence="2">
    <location>
        <begin position="74"/>
        <end position="79"/>
    </location>
</feature>
<proteinExistence type="evidence at protein level"/>
<comment type="function">
    <text evidence="3">Binds to muscle nicotinic acetylcholine receptor (nAChR) and inhibit acetylcholine from binding to the receptor, thereby impairing neuromuscular transmission.</text>
</comment>
<comment type="subcellular location">
    <subcellularLocation>
        <location evidence="4">Secreted</location>
    </subcellularLocation>
</comment>
<comment type="tissue specificity">
    <text evidence="5">Expressed by the venom gland.</text>
</comment>
<comment type="mass spectrometry">
    <text>Average mass.</text>
</comment>
<comment type="similarity">
    <text evidence="5">Belongs to the three-finger toxin family. Short-chain subfamily. Type I alpha-neurotoxin sub-subfamily.</text>
</comment>
<reference key="1">
    <citation type="journal article" date="2011" name="J. Proteomics">
        <title>Snake venomics and venom gland transcriptomic analysis of Brazilian coral snakes, Micrurus altirostris and M. corallinus.</title>
        <authorList>
            <person name="Correa-Netto C."/>
            <person name="Junqueira-de-Azevedo Ide L."/>
            <person name="Silva D.A."/>
            <person name="Ho P.L."/>
            <person name="Leitao-de-Araujo M."/>
            <person name="Alves M.L."/>
            <person name="Sanz L."/>
            <person name="Foguel D."/>
            <person name="Zingali R.B."/>
            <person name="Calvete J.J."/>
        </authorList>
    </citation>
    <scope>NUCLEOTIDE SEQUENCE [MRNA]</scope>
    <scope>PROTEIN SEQUENCE OF 22-36</scope>
    <scope>MASS SPECTROMETRY</scope>
    <scope>SUBCELLULAR LOCATION</scope>
    <source>
        <tissue>Venom</tissue>
        <tissue>Venom gland</tissue>
    </source>
</reference>
<protein>
    <recommendedName>
        <fullName>Three-finger toxin MALT0057C</fullName>
    </recommendedName>
    <alternativeName>
        <fullName>MALT0057C</fullName>
    </alternativeName>
</protein>
<dbReference type="EMBL" id="JF754476">
    <property type="protein sequence ID" value="AED89565.1"/>
    <property type="molecule type" value="mRNA"/>
</dbReference>
<dbReference type="SMR" id="F5CPD8"/>
<dbReference type="GO" id="GO:0005576">
    <property type="term" value="C:extracellular region"/>
    <property type="evidence" value="ECO:0007669"/>
    <property type="project" value="UniProtKB-SubCell"/>
</dbReference>
<dbReference type="GO" id="GO:0030550">
    <property type="term" value="F:acetylcholine receptor inhibitor activity"/>
    <property type="evidence" value="ECO:0007669"/>
    <property type="project" value="UniProtKB-KW"/>
</dbReference>
<dbReference type="GO" id="GO:0099106">
    <property type="term" value="F:ion channel regulator activity"/>
    <property type="evidence" value="ECO:0007669"/>
    <property type="project" value="UniProtKB-KW"/>
</dbReference>
<dbReference type="GO" id="GO:0090729">
    <property type="term" value="F:toxin activity"/>
    <property type="evidence" value="ECO:0007669"/>
    <property type="project" value="UniProtKB-KW"/>
</dbReference>
<dbReference type="CDD" id="cd00206">
    <property type="entry name" value="TFP_snake_toxin"/>
    <property type="match status" value="1"/>
</dbReference>
<dbReference type="FunFam" id="2.10.60.10:FF:000024">
    <property type="entry name" value="Cytotoxin 1"/>
    <property type="match status" value="1"/>
</dbReference>
<dbReference type="Gene3D" id="2.10.60.10">
    <property type="entry name" value="CD59"/>
    <property type="match status" value="1"/>
</dbReference>
<dbReference type="InterPro" id="IPR003571">
    <property type="entry name" value="Snake_3FTx"/>
</dbReference>
<dbReference type="InterPro" id="IPR045860">
    <property type="entry name" value="Snake_toxin-like_sf"/>
</dbReference>
<dbReference type="InterPro" id="IPR018354">
    <property type="entry name" value="Snake_toxin_con_site"/>
</dbReference>
<dbReference type="InterPro" id="IPR054131">
    <property type="entry name" value="Toxin_cobra-type"/>
</dbReference>
<dbReference type="Pfam" id="PF21947">
    <property type="entry name" value="Toxin_cobra-type"/>
    <property type="match status" value="1"/>
</dbReference>
<dbReference type="SUPFAM" id="SSF57302">
    <property type="entry name" value="Snake toxin-like"/>
    <property type="match status" value="1"/>
</dbReference>
<dbReference type="PROSITE" id="PS00272">
    <property type="entry name" value="SNAKE_TOXIN"/>
    <property type="match status" value="1"/>
</dbReference>
<sequence>MKTLLLTLVVVTIVCLDFGHTMICYNQQSSQPPTTTTCSEGQCYKQRWRDHRGWRTERGCGCPKAIPEVKLNCCKTDRCNG</sequence>